<comment type="function">
    <text evidence="1">Produces ATP from ADP in the presence of a proton gradient across the membrane. The catalytic sites are hosted primarily by the beta subunits.</text>
</comment>
<comment type="catalytic activity">
    <reaction evidence="1">
        <text>ATP + H2O + 4 H(+)(in) = ADP + phosphate + 5 H(+)(out)</text>
        <dbReference type="Rhea" id="RHEA:57720"/>
        <dbReference type="ChEBI" id="CHEBI:15377"/>
        <dbReference type="ChEBI" id="CHEBI:15378"/>
        <dbReference type="ChEBI" id="CHEBI:30616"/>
        <dbReference type="ChEBI" id="CHEBI:43474"/>
        <dbReference type="ChEBI" id="CHEBI:456216"/>
        <dbReference type="EC" id="7.1.2.2"/>
    </reaction>
</comment>
<comment type="subunit">
    <text evidence="1">F-type ATPases have 2 components, CF(1) - the catalytic core - and CF(0) - the membrane proton channel. CF(1) has five subunits: alpha(3), beta(3), gamma(1), delta(1), epsilon(1). CF(0) has three main subunits: a(1), b(2) and c(9-12). The alpha and beta chains form an alternating ring which encloses part of the gamma chain. CF(1) is attached to CF(0) by a central stalk formed by the gamma and epsilon chains, while a peripheral stalk is formed by the delta and b chains.</text>
</comment>
<comment type="subcellular location">
    <subcellularLocation>
        <location evidence="1">Cell inner membrane</location>
        <topology evidence="1">Peripheral membrane protein</topology>
    </subcellularLocation>
</comment>
<comment type="similarity">
    <text evidence="1">Belongs to the ATPase alpha/beta chains family.</text>
</comment>
<reference key="1">
    <citation type="journal article" date="2008" name="Proc. Natl. Acad. Sci. U.S.A.">
        <title>Nitrogen fixation island and rhizosphere competence traits in the genome of root-associated Pseudomonas stutzeri A1501.</title>
        <authorList>
            <person name="Yan Y."/>
            <person name="Yang J."/>
            <person name="Dou Y."/>
            <person name="Chen M."/>
            <person name="Ping S."/>
            <person name="Peng J."/>
            <person name="Lu W."/>
            <person name="Zhang W."/>
            <person name="Yao Z."/>
            <person name="Li H."/>
            <person name="Liu W."/>
            <person name="He S."/>
            <person name="Geng L."/>
            <person name="Zhang X."/>
            <person name="Yang F."/>
            <person name="Yu H."/>
            <person name="Zhan Y."/>
            <person name="Li D."/>
            <person name="Lin Z."/>
            <person name="Wang Y."/>
            <person name="Elmerich C."/>
            <person name="Lin M."/>
            <person name="Jin Q."/>
        </authorList>
    </citation>
    <scope>NUCLEOTIDE SEQUENCE [LARGE SCALE GENOMIC DNA]</scope>
    <source>
        <strain>A1501</strain>
    </source>
</reference>
<sequence>MSSGRIVQIIGAVIDVEFPRDLVPNVYDALKVQGAETTLEVQQQLGDGIVRTIAMGSTEGLKRGLDVVNTGTGISVPVGKQTLGRIMDVLGNPIDEAGPIGEEERWTIHRAAPSYSEQAGGNELLETGIKVIDLVCPFAKGGKVGLFGGAGVGKTVNMMELIRNIAMEHSGYSVFAGVGERTREGNDFYHEMKDSNVLDKVALVYGQMNEPPGNRLRVALTGLTMAEKFRDEGRDVLLFVDNIYRYTLAGTEVSALLGRMPSAVGYQPTLAEEMGVLQERITSTKNGSITSVQAVYVPADDLTDPSPATTFAHLDATVVLSRDIASLGIYPAVDPLDSTSRQLDPLVIGQEHYDTARGVQYVLQRYKELKDIIAILGMDELSEQDKQLVSRARKIQRFLSQPFFVAEVFTGSPGKYVPLKETIRGFSGILNGDYDHLPEQAFYMVGSIDEAIEKAKKL</sequence>
<gene>
    <name evidence="1" type="primary">atpD</name>
    <name type="ordered locus">PST_4191</name>
</gene>
<proteinExistence type="inferred from homology"/>
<dbReference type="EC" id="7.1.2.2" evidence="1"/>
<dbReference type="EMBL" id="CP000304">
    <property type="protein sequence ID" value="ABP81813.1"/>
    <property type="molecule type" value="Genomic_DNA"/>
</dbReference>
<dbReference type="RefSeq" id="WP_011915191.1">
    <property type="nucleotide sequence ID" value="NC_009434.1"/>
</dbReference>
<dbReference type="SMR" id="A4VS62"/>
<dbReference type="GeneID" id="66823485"/>
<dbReference type="KEGG" id="psa:PST_4191"/>
<dbReference type="eggNOG" id="COG0055">
    <property type="taxonomic scope" value="Bacteria"/>
</dbReference>
<dbReference type="HOGENOM" id="CLU_022398_0_2_6"/>
<dbReference type="Proteomes" id="UP000000233">
    <property type="component" value="Chromosome"/>
</dbReference>
<dbReference type="GO" id="GO:0005886">
    <property type="term" value="C:plasma membrane"/>
    <property type="evidence" value="ECO:0007669"/>
    <property type="project" value="UniProtKB-SubCell"/>
</dbReference>
<dbReference type="GO" id="GO:0045259">
    <property type="term" value="C:proton-transporting ATP synthase complex"/>
    <property type="evidence" value="ECO:0007669"/>
    <property type="project" value="UniProtKB-KW"/>
</dbReference>
<dbReference type="GO" id="GO:0005524">
    <property type="term" value="F:ATP binding"/>
    <property type="evidence" value="ECO:0007669"/>
    <property type="project" value="UniProtKB-UniRule"/>
</dbReference>
<dbReference type="GO" id="GO:0016887">
    <property type="term" value="F:ATP hydrolysis activity"/>
    <property type="evidence" value="ECO:0007669"/>
    <property type="project" value="InterPro"/>
</dbReference>
<dbReference type="GO" id="GO:0046933">
    <property type="term" value="F:proton-transporting ATP synthase activity, rotational mechanism"/>
    <property type="evidence" value="ECO:0007669"/>
    <property type="project" value="UniProtKB-UniRule"/>
</dbReference>
<dbReference type="CDD" id="cd18110">
    <property type="entry name" value="ATP-synt_F1_beta_C"/>
    <property type="match status" value="1"/>
</dbReference>
<dbReference type="CDD" id="cd18115">
    <property type="entry name" value="ATP-synt_F1_beta_N"/>
    <property type="match status" value="1"/>
</dbReference>
<dbReference type="CDD" id="cd01133">
    <property type="entry name" value="F1-ATPase_beta_CD"/>
    <property type="match status" value="1"/>
</dbReference>
<dbReference type="FunFam" id="1.10.1140.10:FF:000001">
    <property type="entry name" value="ATP synthase subunit beta"/>
    <property type="match status" value="1"/>
</dbReference>
<dbReference type="FunFam" id="3.40.50.300:FF:000004">
    <property type="entry name" value="ATP synthase subunit beta"/>
    <property type="match status" value="1"/>
</dbReference>
<dbReference type="Gene3D" id="2.40.10.170">
    <property type="match status" value="1"/>
</dbReference>
<dbReference type="Gene3D" id="1.10.1140.10">
    <property type="entry name" value="Bovine Mitochondrial F1-atpase, Atp Synthase Beta Chain, Chain D, domain 3"/>
    <property type="match status" value="1"/>
</dbReference>
<dbReference type="Gene3D" id="3.40.50.300">
    <property type="entry name" value="P-loop containing nucleotide triphosphate hydrolases"/>
    <property type="match status" value="1"/>
</dbReference>
<dbReference type="HAMAP" id="MF_01347">
    <property type="entry name" value="ATP_synth_beta_bact"/>
    <property type="match status" value="1"/>
</dbReference>
<dbReference type="InterPro" id="IPR003593">
    <property type="entry name" value="AAA+_ATPase"/>
</dbReference>
<dbReference type="InterPro" id="IPR055190">
    <property type="entry name" value="ATP-synt_VA_C"/>
</dbReference>
<dbReference type="InterPro" id="IPR005722">
    <property type="entry name" value="ATP_synth_F1_bsu"/>
</dbReference>
<dbReference type="InterPro" id="IPR020003">
    <property type="entry name" value="ATPase_a/bsu_AS"/>
</dbReference>
<dbReference type="InterPro" id="IPR050053">
    <property type="entry name" value="ATPase_alpha/beta_chains"/>
</dbReference>
<dbReference type="InterPro" id="IPR004100">
    <property type="entry name" value="ATPase_F1/V1/A1_a/bsu_N"/>
</dbReference>
<dbReference type="InterPro" id="IPR036121">
    <property type="entry name" value="ATPase_F1/V1/A1_a/bsu_N_sf"/>
</dbReference>
<dbReference type="InterPro" id="IPR000194">
    <property type="entry name" value="ATPase_F1/V1/A1_a/bsu_nucl-bd"/>
</dbReference>
<dbReference type="InterPro" id="IPR024034">
    <property type="entry name" value="ATPase_F1/V1_b/a_C"/>
</dbReference>
<dbReference type="InterPro" id="IPR027417">
    <property type="entry name" value="P-loop_NTPase"/>
</dbReference>
<dbReference type="NCBIfam" id="TIGR01039">
    <property type="entry name" value="atpD"/>
    <property type="match status" value="1"/>
</dbReference>
<dbReference type="PANTHER" id="PTHR15184">
    <property type="entry name" value="ATP SYNTHASE"/>
    <property type="match status" value="1"/>
</dbReference>
<dbReference type="PANTHER" id="PTHR15184:SF71">
    <property type="entry name" value="ATP SYNTHASE SUBUNIT BETA, MITOCHONDRIAL"/>
    <property type="match status" value="1"/>
</dbReference>
<dbReference type="Pfam" id="PF00006">
    <property type="entry name" value="ATP-synt_ab"/>
    <property type="match status" value="1"/>
</dbReference>
<dbReference type="Pfam" id="PF02874">
    <property type="entry name" value="ATP-synt_ab_N"/>
    <property type="match status" value="1"/>
</dbReference>
<dbReference type="Pfam" id="PF22919">
    <property type="entry name" value="ATP-synt_VA_C"/>
    <property type="match status" value="1"/>
</dbReference>
<dbReference type="SMART" id="SM00382">
    <property type="entry name" value="AAA"/>
    <property type="match status" value="1"/>
</dbReference>
<dbReference type="SUPFAM" id="SSF47917">
    <property type="entry name" value="C-terminal domain of alpha and beta subunits of F1 ATP synthase"/>
    <property type="match status" value="1"/>
</dbReference>
<dbReference type="SUPFAM" id="SSF50615">
    <property type="entry name" value="N-terminal domain of alpha and beta subunits of F1 ATP synthase"/>
    <property type="match status" value="1"/>
</dbReference>
<dbReference type="SUPFAM" id="SSF52540">
    <property type="entry name" value="P-loop containing nucleoside triphosphate hydrolases"/>
    <property type="match status" value="1"/>
</dbReference>
<dbReference type="PROSITE" id="PS00152">
    <property type="entry name" value="ATPASE_ALPHA_BETA"/>
    <property type="match status" value="1"/>
</dbReference>
<keyword id="KW-0066">ATP synthesis</keyword>
<keyword id="KW-0067">ATP-binding</keyword>
<keyword id="KW-0997">Cell inner membrane</keyword>
<keyword id="KW-1003">Cell membrane</keyword>
<keyword id="KW-0139">CF(1)</keyword>
<keyword id="KW-0375">Hydrogen ion transport</keyword>
<keyword id="KW-0406">Ion transport</keyword>
<keyword id="KW-0472">Membrane</keyword>
<keyword id="KW-0547">Nucleotide-binding</keyword>
<keyword id="KW-1185">Reference proteome</keyword>
<keyword id="KW-1278">Translocase</keyword>
<keyword id="KW-0813">Transport</keyword>
<feature type="chain" id="PRO_1000055148" description="ATP synthase subunit beta">
    <location>
        <begin position="1"/>
        <end position="458"/>
    </location>
</feature>
<feature type="binding site" evidence="1">
    <location>
        <begin position="148"/>
        <end position="155"/>
    </location>
    <ligand>
        <name>ATP</name>
        <dbReference type="ChEBI" id="CHEBI:30616"/>
    </ligand>
</feature>
<accession>A4VS62</accession>
<protein>
    <recommendedName>
        <fullName evidence="1">ATP synthase subunit beta</fullName>
        <ecNumber evidence="1">7.1.2.2</ecNumber>
    </recommendedName>
    <alternativeName>
        <fullName evidence="1">ATP synthase F1 sector subunit beta</fullName>
    </alternativeName>
    <alternativeName>
        <fullName evidence="1">F-ATPase subunit beta</fullName>
    </alternativeName>
</protein>
<organism>
    <name type="scientific">Stutzerimonas stutzeri (strain A1501)</name>
    <name type="common">Pseudomonas stutzeri</name>
    <dbReference type="NCBI Taxonomy" id="379731"/>
    <lineage>
        <taxon>Bacteria</taxon>
        <taxon>Pseudomonadati</taxon>
        <taxon>Pseudomonadota</taxon>
        <taxon>Gammaproteobacteria</taxon>
        <taxon>Pseudomonadales</taxon>
        <taxon>Pseudomonadaceae</taxon>
        <taxon>Stutzerimonas</taxon>
    </lineage>
</organism>
<name>ATPB_STUS1</name>
<evidence type="ECO:0000255" key="1">
    <source>
        <dbReference type="HAMAP-Rule" id="MF_01347"/>
    </source>
</evidence>